<feature type="chain" id="PRO_1000115798" description="Molybdenum cofactor guanylyltransferase">
    <location>
        <begin position="1"/>
        <end position="201"/>
    </location>
</feature>
<feature type="binding site" evidence="1">
    <location>
        <begin position="14"/>
        <end position="16"/>
    </location>
    <ligand>
        <name>GTP</name>
        <dbReference type="ChEBI" id="CHEBI:37565"/>
    </ligand>
</feature>
<feature type="binding site" evidence="1">
    <location>
        <position position="31"/>
    </location>
    <ligand>
        <name>GTP</name>
        <dbReference type="ChEBI" id="CHEBI:37565"/>
    </ligand>
</feature>
<feature type="binding site" evidence="1">
    <location>
        <position position="104"/>
    </location>
    <ligand>
        <name>GTP</name>
        <dbReference type="ChEBI" id="CHEBI:37565"/>
    </ligand>
</feature>
<feature type="binding site" evidence="1">
    <location>
        <position position="104"/>
    </location>
    <ligand>
        <name>Mg(2+)</name>
        <dbReference type="ChEBI" id="CHEBI:18420"/>
    </ligand>
</feature>
<organism>
    <name type="scientific">Helicobacter pylori (strain P12)</name>
    <dbReference type="NCBI Taxonomy" id="570508"/>
    <lineage>
        <taxon>Bacteria</taxon>
        <taxon>Pseudomonadati</taxon>
        <taxon>Campylobacterota</taxon>
        <taxon>Epsilonproteobacteria</taxon>
        <taxon>Campylobacterales</taxon>
        <taxon>Helicobacteraceae</taxon>
        <taxon>Helicobacter</taxon>
    </lineage>
</organism>
<proteinExistence type="inferred from homology"/>
<reference key="1">
    <citation type="submission" date="2008-10" db="EMBL/GenBank/DDBJ databases">
        <title>The complete genome sequence of Helicobacter pylori strain P12.</title>
        <authorList>
            <person name="Fischer W."/>
            <person name="Windhager L."/>
            <person name="Karnholz A."/>
            <person name="Zeiller M."/>
            <person name="Zimmer R."/>
            <person name="Haas R."/>
        </authorList>
    </citation>
    <scope>NUCLEOTIDE SEQUENCE [LARGE SCALE GENOMIC DNA]</scope>
    <source>
        <strain>P12</strain>
    </source>
</reference>
<sequence length="201" mass="22930">MKNPIIDNIPCVLLAGGKSSRFTINNIQINKALMPLKSYSSLLEYQYTRLLKLFKQVIISAKKSYELNAPYLLEKESGLFSPLFGIHNAFLTLQTPYIFFIPIDAPLVSFESIKALCGIENFSVVYAKSPTKEHYLISLWHKSTLNALNYTLKTQNYRLSDLVKNTSSVAIHFNQEEEFLNLNTLKDYELAVQILKKRANG</sequence>
<gene>
    <name evidence="1" type="primary">mobA</name>
    <name type="ordered locus">HPP12_0778</name>
</gene>
<keyword id="KW-0963">Cytoplasm</keyword>
<keyword id="KW-0342">GTP-binding</keyword>
<keyword id="KW-0460">Magnesium</keyword>
<keyword id="KW-0479">Metal-binding</keyword>
<keyword id="KW-0501">Molybdenum cofactor biosynthesis</keyword>
<keyword id="KW-0547">Nucleotide-binding</keyword>
<keyword id="KW-0808">Transferase</keyword>
<protein>
    <recommendedName>
        <fullName evidence="1">Molybdenum cofactor guanylyltransferase</fullName>
        <shortName evidence="1">MoCo guanylyltransferase</shortName>
        <ecNumber evidence="1">2.7.7.77</ecNumber>
    </recommendedName>
    <alternativeName>
        <fullName evidence="1">GTP:molybdopterin guanylyltransferase</fullName>
    </alternativeName>
    <alternativeName>
        <fullName evidence="1">Mo-MPT guanylyltransferase</fullName>
    </alternativeName>
    <alternativeName>
        <fullName evidence="1">Molybdopterin guanylyltransferase</fullName>
    </alternativeName>
    <alternativeName>
        <fullName evidence="1">Molybdopterin-guanine dinucleotide synthase</fullName>
        <shortName evidence="1">MGD synthase</shortName>
    </alternativeName>
</protein>
<accession>B6JM02</accession>
<name>MOBA_HELP2</name>
<comment type="function">
    <text evidence="1">Transfers a GMP moiety from GTP to Mo-molybdopterin (Mo-MPT) cofactor (Moco or molybdenum cofactor) to form Mo-molybdopterin guanine dinucleotide (Mo-MGD) cofactor.</text>
</comment>
<comment type="catalytic activity">
    <reaction evidence="1">
        <text>Mo-molybdopterin + GTP + H(+) = Mo-molybdopterin guanine dinucleotide + diphosphate</text>
        <dbReference type="Rhea" id="RHEA:34243"/>
        <dbReference type="ChEBI" id="CHEBI:15378"/>
        <dbReference type="ChEBI" id="CHEBI:33019"/>
        <dbReference type="ChEBI" id="CHEBI:37565"/>
        <dbReference type="ChEBI" id="CHEBI:71302"/>
        <dbReference type="ChEBI" id="CHEBI:71310"/>
        <dbReference type="EC" id="2.7.7.77"/>
    </reaction>
</comment>
<comment type="cofactor">
    <cofactor evidence="1">
        <name>Mg(2+)</name>
        <dbReference type="ChEBI" id="CHEBI:18420"/>
    </cofactor>
</comment>
<comment type="subunit">
    <text evidence="1">Monomer.</text>
</comment>
<comment type="subcellular location">
    <subcellularLocation>
        <location evidence="1">Cytoplasm</location>
    </subcellularLocation>
</comment>
<comment type="domain">
    <text evidence="1">The N-terminal domain determines nucleotide recognition and specific binding, while the C-terminal domain determines the specific binding to the target protein.</text>
</comment>
<comment type="similarity">
    <text evidence="1">Belongs to the MobA family.</text>
</comment>
<dbReference type="EC" id="2.7.7.77" evidence="1"/>
<dbReference type="EMBL" id="CP001217">
    <property type="protein sequence ID" value="ACJ07930.1"/>
    <property type="molecule type" value="Genomic_DNA"/>
</dbReference>
<dbReference type="SMR" id="B6JM02"/>
<dbReference type="KEGG" id="hpp:HPP12_0778"/>
<dbReference type="HOGENOM" id="CLU_055597_2_2_7"/>
<dbReference type="Proteomes" id="UP000008198">
    <property type="component" value="Chromosome"/>
</dbReference>
<dbReference type="GO" id="GO:0005737">
    <property type="term" value="C:cytoplasm"/>
    <property type="evidence" value="ECO:0007669"/>
    <property type="project" value="UniProtKB-SubCell"/>
</dbReference>
<dbReference type="GO" id="GO:0005525">
    <property type="term" value="F:GTP binding"/>
    <property type="evidence" value="ECO:0007669"/>
    <property type="project" value="UniProtKB-UniRule"/>
</dbReference>
<dbReference type="GO" id="GO:0046872">
    <property type="term" value="F:metal ion binding"/>
    <property type="evidence" value="ECO:0007669"/>
    <property type="project" value="UniProtKB-KW"/>
</dbReference>
<dbReference type="GO" id="GO:0061603">
    <property type="term" value="F:molybdenum cofactor guanylyltransferase activity"/>
    <property type="evidence" value="ECO:0007669"/>
    <property type="project" value="UniProtKB-EC"/>
</dbReference>
<dbReference type="GO" id="GO:1902758">
    <property type="term" value="P:bis(molybdopterin guanine dinucleotide)molybdenum biosynthetic process"/>
    <property type="evidence" value="ECO:0007669"/>
    <property type="project" value="TreeGrafter"/>
</dbReference>
<dbReference type="CDD" id="cd02503">
    <property type="entry name" value="MobA"/>
    <property type="match status" value="1"/>
</dbReference>
<dbReference type="Gene3D" id="3.90.550.10">
    <property type="entry name" value="Spore Coat Polysaccharide Biosynthesis Protein SpsA, Chain A"/>
    <property type="match status" value="1"/>
</dbReference>
<dbReference type="HAMAP" id="MF_00316">
    <property type="entry name" value="MobA"/>
    <property type="match status" value="1"/>
</dbReference>
<dbReference type="InterPro" id="IPR025877">
    <property type="entry name" value="MobA-like_NTP_Trfase"/>
</dbReference>
<dbReference type="InterPro" id="IPR013482">
    <property type="entry name" value="Molybde_CF_guanTrfase"/>
</dbReference>
<dbReference type="InterPro" id="IPR029044">
    <property type="entry name" value="Nucleotide-diphossugar_trans"/>
</dbReference>
<dbReference type="NCBIfam" id="NF001837">
    <property type="entry name" value="PRK00560.1"/>
    <property type="match status" value="1"/>
</dbReference>
<dbReference type="PANTHER" id="PTHR19136">
    <property type="entry name" value="MOLYBDENUM COFACTOR GUANYLYLTRANSFERASE"/>
    <property type="match status" value="1"/>
</dbReference>
<dbReference type="PANTHER" id="PTHR19136:SF81">
    <property type="entry name" value="MOLYBDENUM COFACTOR GUANYLYLTRANSFERASE"/>
    <property type="match status" value="1"/>
</dbReference>
<dbReference type="Pfam" id="PF12804">
    <property type="entry name" value="NTP_transf_3"/>
    <property type="match status" value="1"/>
</dbReference>
<dbReference type="SUPFAM" id="SSF53448">
    <property type="entry name" value="Nucleotide-diphospho-sugar transferases"/>
    <property type="match status" value="1"/>
</dbReference>
<evidence type="ECO:0000255" key="1">
    <source>
        <dbReference type="HAMAP-Rule" id="MF_00316"/>
    </source>
</evidence>